<gene>
    <name evidence="1" type="primary">fusA1</name>
    <name type="ordered locus">MXAN_2408</name>
</gene>
<keyword id="KW-0963">Cytoplasm</keyword>
<keyword id="KW-0251">Elongation factor</keyword>
<keyword id="KW-0342">GTP-binding</keyword>
<keyword id="KW-0547">Nucleotide-binding</keyword>
<keyword id="KW-0648">Protein biosynthesis</keyword>
<keyword id="KW-1185">Reference proteome</keyword>
<evidence type="ECO:0000255" key="1">
    <source>
        <dbReference type="HAMAP-Rule" id="MF_00054"/>
    </source>
</evidence>
<proteinExistence type="inferred from homology"/>
<dbReference type="EMBL" id="CP000113">
    <property type="protein sequence ID" value="ABF92388.1"/>
    <property type="molecule type" value="Genomic_DNA"/>
</dbReference>
<dbReference type="RefSeq" id="WP_011552483.1">
    <property type="nucleotide sequence ID" value="NC_008095.1"/>
</dbReference>
<dbReference type="SMR" id="Q1D9P5"/>
<dbReference type="STRING" id="246197.MXAN_2408"/>
<dbReference type="EnsemblBacteria" id="ABF92388">
    <property type="protein sequence ID" value="ABF92388"/>
    <property type="gene ID" value="MXAN_2408"/>
</dbReference>
<dbReference type="GeneID" id="41359792"/>
<dbReference type="KEGG" id="mxa:MXAN_2408"/>
<dbReference type="eggNOG" id="COG0480">
    <property type="taxonomic scope" value="Bacteria"/>
</dbReference>
<dbReference type="HOGENOM" id="CLU_002794_4_1_7"/>
<dbReference type="OrthoDB" id="9760518at2"/>
<dbReference type="Proteomes" id="UP000002402">
    <property type="component" value="Chromosome"/>
</dbReference>
<dbReference type="GO" id="GO:0005737">
    <property type="term" value="C:cytoplasm"/>
    <property type="evidence" value="ECO:0007669"/>
    <property type="project" value="UniProtKB-SubCell"/>
</dbReference>
<dbReference type="GO" id="GO:0005525">
    <property type="term" value="F:GTP binding"/>
    <property type="evidence" value="ECO:0007669"/>
    <property type="project" value="UniProtKB-UniRule"/>
</dbReference>
<dbReference type="GO" id="GO:0003924">
    <property type="term" value="F:GTPase activity"/>
    <property type="evidence" value="ECO:0007669"/>
    <property type="project" value="InterPro"/>
</dbReference>
<dbReference type="GO" id="GO:0003746">
    <property type="term" value="F:translation elongation factor activity"/>
    <property type="evidence" value="ECO:0007669"/>
    <property type="project" value="UniProtKB-UniRule"/>
</dbReference>
<dbReference type="CDD" id="cd01886">
    <property type="entry name" value="EF-G"/>
    <property type="match status" value="1"/>
</dbReference>
<dbReference type="CDD" id="cd16262">
    <property type="entry name" value="EFG_III"/>
    <property type="match status" value="1"/>
</dbReference>
<dbReference type="CDD" id="cd01434">
    <property type="entry name" value="EFG_mtEFG1_IV"/>
    <property type="match status" value="1"/>
</dbReference>
<dbReference type="CDD" id="cd04097">
    <property type="entry name" value="mtEFG1_C"/>
    <property type="match status" value="1"/>
</dbReference>
<dbReference type="CDD" id="cd04091">
    <property type="entry name" value="mtEFG1_II_like"/>
    <property type="match status" value="1"/>
</dbReference>
<dbReference type="FunFam" id="3.30.230.10:FF:000003">
    <property type="entry name" value="Elongation factor G"/>
    <property type="match status" value="1"/>
</dbReference>
<dbReference type="FunFam" id="3.30.70.240:FF:000001">
    <property type="entry name" value="Elongation factor G"/>
    <property type="match status" value="1"/>
</dbReference>
<dbReference type="FunFam" id="3.30.70.870:FF:000001">
    <property type="entry name" value="Elongation factor G"/>
    <property type="match status" value="1"/>
</dbReference>
<dbReference type="FunFam" id="3.40.50.300:FF:000029">
    <property type="entry name" value="Elongation factor G"/>
    <property type="match status" value="1"/>
</dbReference>
<dbReference type="FunFam" id="2.40.30.10:FF:000022">
    <property type="entry name" value="Elongation factor G, mitochondrial"/>
    <property type="match status" value="1"/>
</dbReference>
<dbReference type="Gene3D" id="3.30.230.10">
    <property type="match status" value="1"/>
</dbReference>
<dbReference type="Gene3D" id="3.30.70.240">
    <property type="match status" value="1"/>
</dbReference>
<dbReference type="Gene3D" id="3.30.70.870">
    <property type="entry name" value="Elongation Factor G (Translational Gtpase), domain 3"/>
    <property type="match status" value="1"/>
</dbReference>
<dbReference type="Gene3D" id="3.40.50.300">
    <property type="entry name" value="P-loop containing nucleotide triphosphate hydrolases"/>
    <property type="match status" value="1"/>
</dbReference>
<dbReference type="Gene3D" id="2.40.30.10">
    <property type="entry name" value="Translation factors"/>
    <property type="match status" value="1"/>
</dbReference>
<dbReference type="HAMAP" id="MF_00054_B">
    <property type="entry name" value="EF_G_EF_2_B"/>
    <property type="match status" value="1"/>
</dbReference>
<dbReference type="InterPro" id="IPR041095">
    <property type="entry name" value="EFG_II"/>
</dbReference>
<dbReference type="InterPro" id="IPR009022">
    <property type="entry name" value="EFG_III"/>
</dbReference>
<dbReference type="InterPro" id="IPR035647">
    <property type="entry name" value="EFG_III/V"/>
</dbReference>
<dbReference type="InterPro" id="IPR047872">
    <property type="entry name" value="EFG_IV"/>
</dbReference>
<dbReference type="InterPro" id="IPR035649">
    <property type="entry name" value="EFG_V"/>
</dbReference>
<dbReference type="InterPro" id="IPR000640">
    <property type="entry name" value="EFG_V-like"/>
</dbReference>
<dbReference type="InterPro" id="IPR004161">
    <property type="entry name" value="EFTu-like_2"/>
</dbReference>
<dbReference type="InterPro" id="IPR031157">
    <property type="entry name" value="G_TR_CS"/>
</dbReference>
<dbReference type="InterPro" id="IPR027417">
    <property type="entry name" value="P-loop_NTPase"/>
</dbReference>
<dbReference type="InterPro" id="IPR020568">
    <property type="entry name" value="Ribosomal_Su5_D2-typ_SF"/>
</dbReference>
<dbReference type="InterPro" id="IPR014721">
    <property type="entry name" value="Ribsml_uS5_D2-typ_fold_subgr"/>
</dbReference>
<dbReference type="InterPro" id="IPR005225">
    <property type="entry name" value="Small_GTP-bd"/>
</dbReference>
<dbReference type="InterPro" id="IPR000795">
    <property type="entry name" value="T_Tr_GTP-bd_dom"/>
</dbReference>
<dbReference type="InterPro" id="IPR009000">
    <property type="entry name" value="Transl_B-barrel_sf"/>
</dbReference>
<dbReference type="InterPro" id="IPR004540">
    <property type="entry name" value="Transl_elong_EFG/EF2"/>
</dbReference>
<dbReference type="InterPro" id="IPR005517">
    <property type="entry name" value="Transl_elong_EFG/EF2_IV"/>
</dbReference>
<dbReference type="NCBIfam" id="TIGR00484">
    <property type="entry name" value="EF-G"/>
    <property type="match status" value="1"/>
</dbReference>
<dbReference type="NCBIfam" id="NF009381">
    <property type="entry name" value="PRK12740.1-5"/>
    <property type="match status" value="1"/>
</dbReference>
<dbReference type="NCBIfam" id="TIGR00231">
    <property type="entry name" value="small_GTP"/>
    <property type="match status" value="1"/>
</dbReference>
<dbReference type="PANTHER" id="PTHR43636">
    <property type="entry name" value="ELONGATION FACTOR G, MITOCHONDRIAL"/>
    <property type="match status" value="1"/>
</dbReference>
<dbReference type="PANTHER" id="PTHR43636:SF2">
    <property type="entry name" value="ELONGATION FACTOR G, MITOCHONDRIAL"/>
    <property type="match status" value="1"/>
</dbReference>
<dbReference type="Pfam" id="PF00679">
    <property type="entry name" value="EFG_C"/>
    <property type="match status" value="1"/>
</dbReference>
<dbReference type="Pfam" id="PF14492">
    <property type="entry name" value="EFG_III"/>
    <property type="match status" value="1"/>
</dbReference>
<dbReference type="Pfam" id="PF03764">
    <property type="entry name" value="EFG_IV"/>
    <property type="match status" value="1"/>
</dbReference>
<dbReference type="Pfam" id="PF00009">
    <property type="entry name" value="GTP_EFTU"/>
    <property type="match status" value="1"/>
</dbReference>
<dbReference type="Pfam" id="PF03144">
    <property type="entry name" value="GTP_EFTU_D2"/>
    <property type="match status" value="1"/>
</dbReference>
<dbReference type="PRINTS" id="PR00315">
    <property type="entry name" value="ELONGATNFCT"/>
</dbReference>
<dbReference type="SMART" id="SM00838">
    <property type="entry name" value="EFG_C"/>
    <property type="match status" value="1"/>
</dbReference>
<dbReference type="SMART" id="SM00889">
    <property type="entry name" value="EFG_IV"/>
    <property type="match status" value="1"/>
</dbReference>
<dbReference type="SUPFAM" id="SSF54980">
    <property type="entry name" value="EF-G C-terminal domain-like"/>
    <property type="match status" value="2"/>
</dbReference>
<dbReference type="SUPFAM" id="SSF52540">
    <property type="entry name" value="P-loop containing nucleoside triphosphate hydrolases"/>
    <property type="match status" value="1"/>
</dbReference>
<dbReference type="SUPFAM" id="SSF54211">
    <property type="entry name" value="Ribosomal protein S5 domain 2-like"/>
    <property type="match status" value="1"/>
</dbReference>
<dbReference type="SUPFAM" id="SSF50447">
    <property type="entry name" value="Translation proteins"/>
    <property type="match status" value="1"/>
</dbReference>
<dbReference type="PROSITE" id="PS00301">
    <property type="entry name" value="G_TR_1"/>
    <property type="match status" value="1"/>
</dbReference>
<dbReference type="PROSITE" id="PS51722">
    <property type="entry name" value="G_TR_2"/>
    <property type="match status" value="1"/>
</dbReference>
<feature type="chain" id="PRO_0000263473" description="Elongation factor G 1">
    <location>
        <begin position="1"/>
        <end position="704"/>
    </location>
</feature>
<feature type="domain" description="tr-type G">
    <location>
        <begin position="8"/>
        <end position="285"/>
    </location>
</feature>
<feature type="binding site" evidence="1">
    <location>
        <begin position="17"/>
        <end position="24"/>
    </location>
    <ligand>
        <name>GTP</name>
        <dbReference type="ChEBI" id="CHEBI:37565"/>
    </ligand>
</feature>
<feature type="binding site" evidence="1">
    <location>
        <begin position="84"/>
        <end position="88"/>
    </location>
    <ligand>
        <name>GTP</name>
        <dbReference type="ChEBI" id="CHEBI:37565"/>
    </ligand>
</feature>
<feature type="binding site" evidence="1">
    <location>
        <begin position="138"/>
        <end position="141"/>
    </location>
    <ligand>
        <name>GTP</name>
        <dbReference type="ChEBI" id="CHEBI:37565"/>
    </ligand>
</feature>
<sequence length="704" mass="78038">MAANAPIEKIRNIGISAHIDSGKTTLSERILFYTGRIHEIHEVRGKDGVGAIMDNMDLEREKGITIQSAATFAMWGEYNINLIDTPGHVDFTIEVERSLRVLDGAILVLCSVAGVQSQSITVDRQMKRYRVPRIAFVNKMDRSGANYDRVAAQLKEKLNHHPVQMQMPIGAEDRLKGLINLIEMKAYYFDGESGEDIREEEIPAELLEEAKTRRQQMIEGVAEVDDQLGELFLADQPISNEALIAAVRRATIGLKMTPVMCGSAYKNKGVQLLLNAVCAFLPNPKEATNEALDQKNNEAKVILDSDPEKPFVGLAFKLEDGRYGQLTYMRIYQGRVTKGDFIINQSNQKKVKVPRIVRMHSSQMNDINEATAGDIVALFGIECASGDTFTDGVVNYTMTSMHVPDAVISLAVAPKDRSNLTNFSKALNRFTKEDPTFRVHRDEESGQTIIRGMGELHLEIYIERMKREYNCEVQAGKPQVAYRETISQKGEFAYTHKKQTGGSGQFARVCGYIEPLPSDAVQQYEFVDDIVGGSIPREFIPACDKGFTEAVKKGSLIGFPVVGVRVVINDGAFHAVDSSEMAFKTAAIMGFREGYAAAKPIILEPMMKVEVQAPEDFQGSVVGQLNQRRGTILSTETAEGYVTAVAEVPLNTMFGYSTDLRSATQGKGEYTMEFSRYTPVPRNESEALMAAYKEKLAAEQAARK</sequence>
<accession>Q1D9P5</accession>
<name>EFG1_MYXXD</name>
<comment type="function">
    <text evidence="1">Catalyzes the GTP-dependent ribosomal translocation step during translation elongation. During this step, the ribosome changes from the pre-translocational (PRE) to the post-translocational (POST) state as the newly formed A-site-bound peptidyl-tRNA and P-site-bound deacylated tRNA move to the P and E sites, respectively. Catalyzes the coordinated movement of the two tRNA molecules, the mRNA and conformational changes in the ribosome.</text>
</comment>
<comment type="subcellular location">
    <subcellularLocation>
        <location evidence="1">Cytoplasm</location>
    </subcellularLocation>
</comment>
<comment type="similarity">
    <text evidence="1">Belongs to the TRAFAC class translation factor GTPase superfamily. Classic translation factor GTPase family. EF-G/EF-2 subfamily.</text>
</comment>
<organism>
    <name type="scientific">Myxococcus xanthus (strain DK1622)</name>
    <dbReference type="NCBI Taxonomy" id="246197"/>
    <lineage>
        <taxon>Bacteria</taxon>
        <taxon>Pseudomonadati</taxon>
        <taxon>Myxococcota</taxon>
        <taxon>Myxococcia</taxon>
        <taxon>Myxococcales</taxon>
        <taxon>Cystobacterineae</taxon>
        <taxon>Myxococcaceae</taxon>
        <taxon>Myxococcus</taxon>
    </lineage>
</organism>
<reference key="1">
    <citation type="journal article" date="2006" name="Proc. Natl. Acad. Sci. U.S.A.">
        <title>Evolution of sensory complexity recorded in a myxobacterial genome.</title>
        <authorList>
            <person name="Goldman B.S."/>
            <person name="Nierman W.C."/>
            <person name="Kaiser D."/>
            <person name="Slater S.C."/>
            <person name="Durkin A.S."/>
            <person name="Eisen J.A."/>
            <person name="Ronning C.M."/>
            <person name="Barbazuk W.B."/>
            <person name="Blanchard M."/>
            <person name="Field C."/>
            <person name="Halling C."/>
            <person name="Hinkle G."/>
            <person name="Iartchuk O."/>
            <person name="Kim H.S."/>
            <person name="Mackenzie C."/>
            <person name="Madupu R."/>
            <person name="Miller N."/>
            <person name="Shvartsbeyn A."/>
            <person name="Sullivan S.A."/>
            <person name="Vaudin M."/>
            <person name="Wiegand R."/>
            <person name="Kaplan H.B."/>
        </authorList>
    </citation>
    <scope>NUCLEOTIDE SEQUENCE [LARGE SCALE GENOMIC DNA]</scope>
    <source>
        <strain>DK1622</strain>
    </source>
</reference>
<protein>
    <recommendedName>
        <fullName evidence="1">Elongation factor G 1</fullName>
        <shortName evidence="1">EF-G 1</shortName>
    </recommendedName>
</protein>